<sequence>MSVLIKTRHCFVLLGLWLVLPTASAQPLGSLVDIQGVRGNQLVGYSLVVGLDGSGDKNQVKFTGQSMANMLRQFGVQLPEKMDPKVKNVAAVAISATLPPGYGRGQSIDITVSSIGDAKSLRGGTLLLTQLRGADGEVYALAQGNVVVGGIKAEGDSGSSVTVNTPTVGRIPNGASIERQIPSDFQTNNQVVLNLKRPSFKSANNVALALNRAFGANTATAQSATNVMVNAPQDAGARVAFMSLLEDVQINAGEQSPRVVFNARTGTVVIGEGVMVRAAAVSHGNLTVNIREQKNVSQPNPLGGGKTVTTPESDIEVTKGKNQMVMVPAGTRLRSIVNTINSLGASPDDIMAILQALYEAGALDAELVVI</sequence>
<name>FLGI1_YERPE</name>
<proteinExistence type="inferred from homology"/>
<accession>Q8ZHZ4</accession>
<accession>Q0WIU7</accession>
<accession>Q74RJ0</accession>
<accession>Q8CZT0</accession>
<comment type="function">
    <text evidence="1">Assembles around the rod to form the L-ring and probably protects the motor/basal body from shearing forces during rotation.</text>
</comment>
<comment type="subunit">
    <text evidence="1">The basal body constitutes a major portion of the flagellar organelle and consists of four rings (L,P,S, and M) mounted on a central rod.</text>
</comment>
<comment type="subcellular location">
    <subcellularLocation>
        <location evidence="1">Periplasm</location>
    </subcellularLocation>
    <subcellularLocation>
        <location evidence="1">Bacterial flagellum basal body</location>
    </subcellularLocation>
</comment>
<comment type="similarity">
    <text evidence="1">Belongs to the FlgI family.</text>
</comment>
<comment type="sequence caution" evidence="2">
    <conflict type="erroneous initiation">
        <sequence resource="EMBL-CDS" id="AAM86997"/>
    </conflict>
</comment>
<comment type="sequence caution" evidence="2">
    <conflict type="erroneous initiation">
        <sequence resource="EMBL-CDS" id="AAS63216"/>
    </conflict>
</comment>
<feature type="signal peptide" evidence="1">
    <location>
        <begin position="1"/>
        <end position="25"/>
    </location>
</feature>
<feature type="chain" id="PRO_0000041809" description="Flagellar P-ring protein 1">
    <location>
        <begin position="26"/>
        <end position="370"/>
    </location>
</feature>
<reference key="1">
    <citation type="journal article" date="2001" name="Nature">
        <title>Genome sequence of Yersinia pestis, the causative agent of plague.</title>
        <authorList>
            <person name="Parkhill J."/>
            <person name="Wren B.W."/>
            <person name="Thomson N.R."/>
            <person name="Titball R.W."/>
            <person name="Holden M.T.G."/>
            <person name="Prentice M.B."/>
            <person name="Sebaihia M."/>
            <person name="James K.D."/>
            <person name="Churcher C.M."/>
            <person name="Mungall K.L."/>
            <person name="Baker S."/>
            <person name="Basham D."/>
            <person name="Bentley S.D."/>
            <person name="Brooks K."/>
            <person name="Cerdeno-Tarraga A.-M."/>
            <person name="Chillingworth T."/>
            <person name="Cronin A."/>
            <person name="Davies R.M."/>
            <person name="Davis P."/>
            <person name="Dougan G."/>
            <person name="Feltwell T."/>
            <person name="Hamlin N."/>
            <person name="Holroyd S."/>
            <person name="Jagels K."/>
            <person name="Karlyshev A.V."/>
            <person name="Leather S."/>
            <person name="Moule S."/>
            <person name="Oyston P.C.F."/>
            <person name="Quail M.A."/>
            <person name="Rutherford K.M."/>
            <person name="Simmonds M."/>
            <person name="Skelton J."/>
            <person name="Stevens K."/>
            <person name="Whitehead S."/>
            <person name="Barrell B.G."/>
        </authorList>
    </citation>
    <scope>NUCLEOTIDE SEQUENCE [LARGE SCALE GENOMIC DNA]</scope>
    <source>
        <strain>CO-92 / Biovar Orientalis</strain>
    </source>
</reference>
<reference key="2">
    <citation type="journal article" date="2002" name="J. Bacteriol.">
        <title>Genome sequence of Yersinia pestis KIM.</title>
        <authorList>
            <person name="Deng W."/>
            <person name="Burland V."/>
            <person name="Plunkett G. III"/>
            <person name="Boutin A."/>
            <person name="Mayhew G.F."/>
            <person name="Liss P."/>
            <person name="Perna N.T."/>
            <person name="Rose D.J."/>
            <person name="Mau B."/>
            <person name="Zhou S."/>
            <person name="Schwartz D.C."/>
            <person name="Fetherston J.D."/>
            <person name="Lindler L.E."/>
            <person name="Brubaker R.R."/>
            <person name="Plano G.V."/>
            <person name="Straley S.C."/>
            <person name="McDonough K.A."/>
            <person name="Nilles M.L."/>
            <person name="Matson J.S."/>
            <person name="Blattner F.R."/>
            <person name="Perry R.D."/>
        </authorList>
    </citation>
    <scope>NUCLEOTIDE SEQUENCE [LARGE SCALE GENOMIC DNA]</scope>
    <source>
        <strain>KIM10+ / Biovar Mediaevalis</strain>
    </source>
</reference>
<reference key="3">
    <citation type="journal article" date="2004" name="DNA Res.">
        <title>Complete genome sequence of Yersinia pestis strain 91001, an isolate avirulent to humans.</title>
        <authorList>
            <person name="Song Y."/>
            <person name="Tong Z."/>
            <person name="Wang J."/>
            <person name="Wang L."/>
            <person name="Guo Z."/>
            <person name="Han Y."/>
            <person name="Zhang J."/>
            <person name="Pei D."/>
            <person name="Zhou D."/>
            <person name="Qin H."/>
            <person name="Pang X."/>
            <person name="Han Y."/>
            <person name="Zhai J."/>
            <person name="Li M."/>
            <person name="Cui B."/>
            <person name="Qi Z."/>
            <person name="Jin L."/>
            <person name="Dai R."/>
            <person name="Chen F."/>
            <person name="Li S."/>
            <person name="Ye C."/>
            <person name="Du Z."/>
            <person name="Lin W."/>
            <person name="Wang J."/>
            <person name="Yu J."/>
            <person name="Yang H."/>
            <person name="Wang J."/>
            <person name="Huang P."/>
            <person name="Yang R."/>
        </authorList>
    </citation>
    <scope>NUCLEOTIDE SEQUENCE [LARGE SCALE GENOMIC DNA]</scope>
    <source>
        <strain>91001 / Biovar Mediaevalis</strain>
    </source>
</reference>
<keyword id="KW-0975">Bacterial flagellum</keyword>
<keyword id="KW-0574">Periplasm</keyword>
<keyword id="KW-1185">Reference proteome</keyword>
<keyword id="KW-0732">Signal</keyword>
<dbReference type="EMBL" id="AL590842">
    <property type="protein sequence ID" value="CAL19404.1"/>
    <property type="molecule type" value="Genomic_DNA"/>
</dbReference>
<dbReference type="EMBL" id="AE009952">
    <property type="protein sequence ID" value="AAM86997.1"/>
    <property type="status" value="ALT_INIT"/>
    <property type="molecule type" value="Genomic_DNA"/>
</dbReference>
<dbReference type="EMBL" id="AE017042">
    <property type="protein sequence ID" value="AAS63216.1"/>
    <property type="status" value="ALT_INIT"/>
    <property type="molecule type" value="Genomic_DNA"/>
</dbReference>
<dbReference type="PIR" id="AB0090">
    <property type="entry name" value="AB0090"/>
</dbReference>
<dbReference type="RefSeq" id="YP_002345791.1">
    <property type="nucleotide sequence ID" value="NC_003143.1"/>
</dbReference>
<dbReference type="SMR" id="Q8ZHZ4"/>
<dbReference type="IntAct" id="Q8ZHZ4">
    <property type="interactions" value="2"/>
</dbReference>
<dbReference type="STRING" id="214092.YPO0730"/>
<dbReference type="PaxDb" id="214092-YPO0730"/>
<dbReference type="DNASU" id="1148395"/>
<dbReference type="EnsemblBacteria" id="AAS63216">
    <property type="protein sequence ID" value="AAS63216"/>
    <property type="gene ID" value="YP_3041"/>
</dbReference>
<dbReference type="KEGG" id="ype:YPO0730"/>
<dbReference type="KEGG" id="ypk:y3448"/>
<dbReference type="KEGG" id="ypm:YP_3041"/>
<dbReference type="PATRIC" id="fig|214092.21.peg.996"/>
<dbReference type="eggNOG" id="COG1706">
    <property type="taxonomic scope" value="Bacteria"/>
</dbReference>
<dbReference type="HOGENOM" id="CLU_045235_1_0_6"/>
<dbReference type="OrthoDB" id="9786431at2"/>
<dbReference type="Proteomes" id="UP000000815">
    <property type="component" value="Chromosome"/>
</dbReference>
<dbReference type="Proteomes" id="UP000001019">
    <property type="component" value="Chromosome"/>
</dbReference>
<dbReference type="Proteomes" id="UP000002490">
    <property type="component" value="Chromosome"/>
</dbReference>
<dbReference type="GO" id="GO:0009428">
    <property type="term" value="C:bacterial-type flagellum basal body, distal rod, P ring"/>
    <property type="evidence" value="ECO:0000318"/>
    <property type="project" value="GO_Central"/>
</dbReference>
<dbReference type="GO" id="GO:0030288">
    <property type="term" value="C:outer membrane-bounded periplasmic space"/>
    <property type="evidence" value="ECO:0007669"/>
    <property type="project" value="InterPro"/>
</dbReference>
<dbReference type="GO" id="GO:0005198">
    <property type="term" value="F:structural molecule activity"/>
    <property type="evidence" value="ECO:0007669"/>
    <property type="project" value="InterPro"/>
</dbReference>
<dbReference type="GO" id="GO:0071973">
    <property type="term" value="P:bacterial-type flagellum-dependent cell motility"/>
    <property type="evidence" value="ECO:0000318"/>
    <property type="project" value="GO_Central"/>
</dbReference>
<dbReference type="HAMAP" id="MF_00416">
    <property type="entry name" value="FlgI"/>
    <property type="match status" value="1"/>
</dbReference>
<dbReference type="InterPro" id="IPR001782">
    <property type="entry name" value="Flag_FlgI"/>
</dbReference>
<dbReference type="NCBIfam" id="NF003676">
    <property type="entry name" value="PRK05303.1"/>
    <property type="match status" value="1"/>
</dbReference>
<dbReference type="PANTHER" id="PTHR30381">
    <property type="entry name" value="FLAGELLAR P-RING PERIPLASMIC PROTEIN FLGI"/>
    <property type="match status" value="1"/>
</dbReference>
<dbReference type="PANTHER" id="PTHR30381:SF0">
    <property type="entry name" value="FLAGELLAR P-RING PROTEIN"/>
    <property type="match status" value="1"/>
</dbReference>
<dbReference type="Pfam" id="PF02119">
    <property type="entry name" value="FlgI"/>
    <property type="match status" value="1"/>
</dbReference>
<dbReference type="PRINTS" id="PR01010">
    <property type="entry name" value="FLGPRINGFLGI"/>
</dbReference>
<organism>
    <name type="scientific">Yersinia pestis</name>
    <dbReference type="NCBI Taxonomy" id="632"/>
    <lineage>
        <taxon>Bacteria</taxon>
        <taxon>Pseudomonadati</taxon>
        <taxon>Pseudomonadota</taxon>
        <taxon>Gammaproteobacteria</taxon>
        <taxon>Enterobacterales</taxon>
        <taxon>Yersiniaceae</taxon>
        <taxon>Yersinia</taxon>
    </lineage>
</organism>
<gene>
    <name evidence="1" type="primary">flgI1</name>
    <name type="ordered locus">YPO0730</name>
    <name type="ordered locus">y3448</name>
    <name type="ordered locus">YP_3041</name>
</gene>
<evidence type="ECO:0000255" key="1">
    <source>
        <dbReference type="HAMAP-Rule" id="MF_00416"/>
    </source>
</evidence>
<evidence type="ECO:0000305" key="2"/>
<protein>
    <recommendedName>
        <fullName evidence="1">Flagellar P-ring protein 1</fullName>
    </recommendedName>
    <alternativeName>
        <fullName evidence="1">Basal body P-ring protein 1</fullName>
    </alternativeName>
</protein>